<proteinExistence type="inferred from homology"/>
<dbReference type="EMBL" id="CP000133">
    <property type="protein sequence ID" value="ABC88969.1"/>
    <property type="molecule type" value="Genomic_DNA"/>
</dbReference>
<dbReference type="RefSeq" id="WP_011423538.1">
    <property type="nucleotide sequence ID" value="NC_007761.1"/>
</dbReference>
<dbReference type="SMR" id="Q2KDW7"/>
<dbReference type="KEGG" id="ret:RHE_CH00144"/>
<dbReference type="eggNOG" id="COG0484">
    <property type="taxonomic scope" value="Bacteria"/>
</dbReference>
<dbReference type="HOGENOM" id="CLU_017633_0_7_5"/>
<dbReference type="OrthoDB" id="9779889at2"/>
<dbReference type="Proteomes" id="UP000001936">
    <property type="component" value="Chromosome"/>
</dbReference>
<dbReference type="GO" id="GO:0005737">
    <property type="term" value="C:cytoplasm"/>
    <property type="evidence" value="ECO:0007669"/>
    <property type="project" value="UniProtKB-SubCell"/>
</dbReference>
<dbReference type="GO" id="GO:0005524">
    <property type="term" value="F:ATP binding"/>
    <property type="evidence" value="ECO:0007669"/>
    <property type="project" value="InterPro"/>
</dbReference>
<dbReference type="GO" id="GO:0031072">
    <property type="term" value="F:heat shock protein binding"/>
    <property type="evidence" value="ECO:0007669"/>
    <property type="project" value="InterPro"/>
</dbReference>
<dbReference type="GO" id="GO:0051082">
    <property type="term" value="F:unfolded protein binding"/>
    <property type="evidence" value="ECO:0007669"/>
    <property type="project" value="UniProtKB-UniRule"/>
</dbReference>
<dbReference type="GO" id="GO:0008270">
    <property type="term" value="F:zinc ion binding"/>
    <property type="evidence" value="ECO:0007669"/>
    <property type="project" value="UniProtKB-UniRule"/>
</dbReference>
<dbReference type="GO" id="GO:0051085">
    <property type="term" value="P:chaperone cofactor-dependent protein refolding"/>
    <property type="evidence" value="ECO:0007669"/>
    <property type="project" value="TreeGrafter"/>
</dbReference>
<dbReference type="GO" id="GO:0006260">
    <property type="term" value="P:DNA replication"/>
    <property type="evidence" value="ECO:0007669"/>
    <property type="project" value="UniProtKB-KW"/>
</dbReference>
<dbReference type="GO" id="GO:0042026">
    <property type="term" value="P:protein refolding"/>
    <property type="evidence" value="ECO:0007669"/>
    <property type="project" value="TreeGrafter"/>
</dbReference>
<dbReference type="GO" id="GO:0009408">
    <property type="term" value="P:response to heat"/>
    <property type="evidence" value="ECO:0007669"/>
    <property type="project" value="InterPro"/>
</dbReference>
<dbReference type="CDD" id="cd06257">
    <property type="entry name" value="DnaJ"/>
    <property type="match status" value="1"/>
</dbReference>
<dbReference type="CDD" id="cd10747">
    <property type="entry name" value="DnaJ_C"/>
    <property type="match status" value="1"/>
</dbReference>
<dbReference type="CDD" id="cd10719">
    <property type="entry name" value="DnaJ_zf"/>
    <property type="match status" value="1"/>
</dbReference>
<dbReference type="FunFam" id="1.10.287.110:FF:000034">
    <property type="entry name" value="Chaperone protein DnaJ"/>
    <property type="match status" value="1"/>
</dbReference>
<dbReference type="FunFam" id="2.10.230.10:FF:000002">
    <property type="entry name" value="Molecular chaperone DnaJ"/>
    <property type="match status" value="1"/>
</dbReference>
<dbReference type="FunFam" id="2.60.260.20:FF:000004">
    <property type="entry name" value="Molecular chaperone DnaJ"/>
    <property type="match status" value="1"/>
</dbReference>
<dbReference type="Gene3D" id="1.10.287.110">
    <property type="entry name" value="DnaJ domain"/>
    <property type="match status" value="1"/>
</dbReference>
<dbReference type="Gene3D" id="2.10.230.10">
    <property type="entry name" value="Heat shock protein DnaJ, cysteine-rich domain"/>
    <property type="match status" value="1"/>
</dbReference>
<dbReference type="Gene3D" id="2.60.260.20">
    <property type="entry name" value="Urease metallochaperone UreE, N-terminal domain"/>
    <property type="match status" value="2"/>
</dbReference>
<dbReference type="HAMAP" id="MF_01152">
    <property type="entry name" value="DnaJ"/>
    <property type="match status" value="1"/>
</dbReference>
<dbReference type="InterPro" id="IPR012724">
    <property type="entry name" value="DnaJ"/>
</dbReference>
<dbReference type="InterPro" id="IPR002939">
    <property type="entry name" value="DnaJ_C"/>
</dbReference>
<dbReference type="InterPro" id="IPR001623">
    <property type="entry name" value="DnaJ_domain"/>
</dbReference>
<dbReference type="InterPro" id="IPR018253">
    <property type="entry name" value="DnaJ_domain_CS"/>
</dbReference>
<dbReference type="InterPro" id="IPR008971">
    <property type="entry name" value="HSP40/DnaJ_pept-bd"/>
</dbReference>
<dbReference type="InterPro" id="IPR001305">
    <property type="entry name" value="HSP_DnaJ_Cys-rich_dom"/>
</dbReference>
<dbReference type="InterPro" id="IPR036410">
    <property type="entry name" value="HSP_DnaJ_Cys-rich_dom_sf"/>
</dbReference>
<dbReference type="InterPro" id="IPR036869">
    <property type="entry name" value="J_dom_sf"/>
</dbReference>
<dbReference type="NCBIfam" id="TIGR02349">
    <property type="entry name" value="DnaJ_bact"/>
    <property type="match status" value="1"/>
</dbReference>
<dbReference type="NCBIfam" id="NF008035">
    <property type="entry name" value="PRK10767.1"/>
    <property type="match status" value="1"/>
</dbReference>
<dbReference type="PANTHER" id="PTHR43096:SF48">
    <property type="entry name" value="CHAPERONE PROTEIN DNAJ"/>
    <property type="match status" value="1"/>
</dbReference>
<dbReference type="PANTHER" id="PTHR43096">
    <property type="entry name" value="DNAJ HOMOLOG 1, MITOCHONDRIAL-RELATED"/>
    <property type="match status" value="1"/>
</dbReference>
<dbReference type="Pfam" id="PF00226">
    <property type="entry name" value="DnaJ"/>
    <property type="match status" value="1"/>
</dbReference>
<dbReference type="Pfam" id="PF01556">
    <property type="entry name" value="DnaJ_C"/>
    <property type="match status" value="1"/>
</dbReference>
<dbReference type="Pfam" id="PF00684">
    <property type="entry name" value="DnaJ_CXXCXGXG"/>
    <property type="match status" value="1"/>
</dbReference>
<dbReference type="PRINTS" id="PR00625">
    <property type="entry name" value="JDOMAIN"/>
</dbReference>
<dbReference type="SMART" id="SM00271">
    <property type="entry name" value="DnaJ"/>
    <property type="match status" value="1"/>
</dbReference>
<dbReference type="SUPFAM" id="SSF46565">
    <property type="entry name" value="Chaperone J-domain"/>
    <property type="match status" value="1"/>
</dbReference>
<dbReference type="SUPFAM" id="SSF57938">
    <property type="entry name" value="DnaJ/Hsp40 cysteine-rich domain"/>
    <property type="match status" value="1"/>
</dbReference>
<dbReference type="SUPFAM" id="SSF49493">
    <property type="entry name" value="HSP40/DnaJ peptide-binding domain"/>
    <property type="match status" value="2"/>
</dbReference>
<dbReference type="PROSITE" id="PS00636">
    <property type="entry name" value="DNAJ_1"/>
    <property type="match status" value="1"/>
</dbReference>
<dbReference type="PROSITE" id="PS50076">
    <property type="entry name" value="DNAJ_2"/>
    <property type="match status" value="1"/>
</dbReference>
<dbReference type="PROSITE" id="PS51188">
    <property type="entry name" value="ZF_CR"/>
    <property type="match status" value="1"/>
</dbReference>
<comment type="function">
    <text evidence="1">Participates actively in the response to hyperosmotic and heat shock by preventing the aggregation of stress-denatured proteins and by disaggregating proteins, also in an autonomous, DnaK-independent fashion. Unfolded proteins bind initially to DnaJ; upon interaction with the DnaJ-bound protein, DnaK hydrolyzes its bound ATP, resulting in the formation of a stable complex. GrpE releases ADP from DnaK; ATP binding to DnaK triggers the release of the substrate protein, thus completing the reaction cycle. Several rounds of ATP-dependent interactions between DnaJ, DnaK and GrpE are required for fully efficient folding. Also involved, together with DnaK and GrpE, in the DNA replication of plasmids through activation of initiation proteins.</text>
</comment>
<comment type="cofactor">
    <cofactor evidence="1">
        <name>Zn(2+)</name>
        <dbReference type="ChEBI" id="CHEBI:29105"/>
    </cofactor>
    <text evidence="1">Binds 2 Zn(2+) ions per monomer.</text>
</comment>
<comment type="subunit">
    <text evidence="1">Homodimer.</text>
</comment>
<comment type="subcellular location">
    <subcellularLocation>
        <location evidence="1">Cytoplasm</location>
    </subcellularLocation>
</comment>
<comment type="domain">
    <text evidence="1">The J domain is necessary and sufficient to stimulate DnaK ATPase activity. Zinc center 1 plays an important role in the autonomous, DnaK-independent chaperone activity of DnaJ. Zinc center 2 is essential for interaction with DnaK and for DnaJ activity.</text>
</comment>
<comment type="similarity">
    <text evidence="1">Belongs to the DnaJ family.</text>
</comment>
<sequence length="375" mass="40775">MAKADFYETLGVAKSADEKELKSAFRKLAMKYHPDKNPDDKEAERKFKEINEAYEMLKDPQKRAAYDRYGHAAFEHGGMGGGGGGFAGGGFSDIFEDIFGEMMGGGRGRQRSAGGRERGADLRYNMEITLEEAFSGKTAQIRVPTSITCDVCSGSGAKPGTQPKNCGTCQGTGRVRAAQGFFSIERTCPTCHGRGQIIPDPCPKCHGQGRVTEERSLSVNIPAGIEDGTRIRLQGEGEAGTRGGPAGDLYIFLSVKPHEFYQRDGADLYCAVPISMTTAALGGTFDVATLDGTKSRVSVPEGTQAGKQFRLKGKGMPVLRSAQTGDLYIQIQIETPQKLTKRQRELLQEFEQISSKENNPESTGFFARMKEFFEG</sequence>
<keyword id="KW-0143">Chaperone</keyword>
<keyword id="KW-0963">Cytoplasm</keyword>
<keyword id="KW-0235">DNA replication</keyword>
<keyword id="KW-0479">Metal-binding</keyword>
<keyword id="KW-1185">Reference proteome</keyword>
<keyword id="KW-0677">Repeat</keyword>
<keyword id="KW-0346">Stress response</keyword>
<keyword id="KW-0862">Zinc</keyword>
<keyword id="KW-0863">Zinc-finger</keyword>
<protein>
    <recommendedName>
        <fullName evidence="1">Chaperone protein DnaJ</fullName>
    </recommendedName>
</protein>
<name>DNAJ_RHIEC</name>
<accession>Q2KDW7</accession>
<feature type="chain" id="PRO_1000085264" description="Chaperone protein DnaJ">
    <location>
        <begin position="1"/>
        <end position="375"/>
    </location>
</feature>
<feature type="domain" description="J" evidence="1">
    <location>
        <begin position="5"/>
        <end position="70"/>
    </location>
</feature>
<feature type="repeat" description="CXXCXGXG motif">
    <location>
        <begin position="149"/>
        <end position="156"/>
    </location>
</feature>
<feature type="repeat" description="CXXCXGXG motif">
    <location>
        <begin position="166"/>
        <end position="173"/>
    </location>
</feature>
<feature type="repeat" description="CXXCXGXG motif">
    <location>
        <begin position="188"/>
        <end position="195"/>
    </location>
</feature>
<feature type="repeat" description="CXXCXGXG motif">
    <location>
        <begin position="202"/>
        <end position="209"/>
    </location>
</feature>
<feature type="zinc finger region" description="CR-type" evidence="1">
    <location>
        <begin position="136"/>
        <end position="214"/>
    </location>
</feature>
<feature type="binding site" evidence="1">
    <location>
        <position position="149"/>
    </location>
    <ligand>
        <name>Zn(2+)</name>
        <dbReference type="ChEBI" id="CHEBI:29105"/>
        <label>1</label>
    </ligand>
</feature>
<feature type="binding site" evidence="1">
    <location>
        <position position="152"/>
    </location>
    <ligand>
        <name>Zn(2+)</name>
        <dbReference type="ChEBI" id="CHEBI:29105"/>
        <label>1</label>
    </ligand>
</feature>
<feature type="binding site" evidence="1">
    <location>
        <position position="166"/>
    </location>
    <ligand>
        <name>Zn(2+)</name>
        <dbReference type="ChEBI" id="CHEBI:29105"/>
        <label>2</label>
    </ligand>
</feature>
<feature type="binding site" evidence="1">
    <location>
        <position position="169"/>
    </location>
    <ligand>
        <name>Zn(2+)</name>
        <dbReference type="ChEBI" id="CHEBI:29105"/>
        <label>2</label>
    </ligand>
</feature>
<feature type="binding site" evidence="1">
    <location>
        <position position="188"/>
    </location>
    <ligand>
        <name>Zn(2+)</name>
        <dbReference type="ChEBI" id="CHEBI:29105"/>
        <label>2</label>
    </ligand>
</feature>
<feature type="binding site" evidence="1">
    <location>
        <position position="191"/>
    </location>
    <ligand>
        <name>Zn(2+)</name>
        <dbReference type="ChEBI" id="CHEBI:29105"/>
        <label>2</label>
    </ligand>
</feature>
<feature type="binding site" evidence="1">
    <location>
        <position position="202"/>
    </location>
    <ligand>
        <name>Zn(2+)</name>
        <dbReference type="ChEBI" id="CHEBI:29105"/>
        <label>1</label>
    </ligand>
</feature>
<feature type="binding site" evidence="1">
    <location>
        <position position="205"/>
    </location>
    <ligand>
        <name>Zn(2+)</name>
        <dbReference type="ChEBI" id="CHEBI:29105"/>
        <label>1</label>
    </ligand>
</feature>
<reference key="1">
    <citation type="journal article" date="2006" name="Proc. Natl. Acad. Sci. U.S.A.">
        <title>The partitioned Rhizobium etli genome: genetic and metabolic redundancy in seven interacting replicons.</title>
        <authorList>
            <person name="Gonzalez V."/>
            <person name="Santamaria R.I."/>
            <person name="Bustos P."/>
            <person name="Hernandez-Gonzalez I."/>
            <person name="Medrano-Soto A."/>
            <person name="Moreno-Hagelsieb G."/>
            <person name="Janga S.C."/>
            <person name="Ramirez M.A."/>
            <person name="Jimenez-Jacinto V."/>
            <person name="Collado-Vides J."/>
            <person name="Davila G."/>
        </authorList>
    </citation>
    <scope>NUCLEOTIDE SEQUENCE [LARGE SCALE GENOMIC DNA]</scope>
    <source>
        <strain>ATCC 51251 / DSM 11541 / JCM 21823 / NBRC 15573 / CFN 42</strain>
    </source>
</reference>
<evidence type="ECO:0000255" key="1">
    <source>
        <dbReference type="HAMAP-Rule" id="MF_01152"/>
    </source>
</evidence>
<organism>
    <name type="scientific">Rhizobium etli (strain ATCC 51251 / DSM 11541 / JCM 21823 / NBRC 15573 / CFN 42)</name>
    <dbReference type="NCBI Taxonomy" id="347834"/>
    <lineage>
        <taxon>Bacteria</taxon>
        <taxon>Pseudomonadati</taxon>
        <taxon>Pseudomonadota</taxon>
        <taxon>Alphaproteobacteria</taxon>
        <taxon>Hyphomicrobiales</taxon>
        <taxon>Rhizobiaceae</taxon>
        <taxon>Rhizobium/Agrobacterium group</taxon>
        <taxon>Rhizobium</taxon>
    </lineage>
</organism>
<gene>
    <name evidence="1" type="primary">dnaJ</name>
    <name type="ordered locus">RHE_CH00144</name>
</gene>